<sequence>MSAVVKSIKAREILDSRGNPTVEADVVLSDGSFGRAAVPSGASTGSHEAVELRDGDKSRYNGLGVQKAVTNVNTAIAKAISGFKASDQQGLDNLLIELDGTPNKAKLGANAMLATSLAVAHAAAASCHMPLYRYLNNCDEYILPVPMFNILNGGKHASNSTDFQEFMVMPTGAKSFAEALRMGTEVYHSLKKVLKGMNQNTTVGDEGGFAPSLPTNKDAVEVILKAIEKAGYRPGEDIFIALDPASSELYQDGKYTLATENKTLSSAEMVDYWCGWVEKYPIISIEDGLFEDDWDGWKMLTKKIGSKVQLVGDDFYVTNIKRLERGIKENASNSILIKLNQIGTLSETIAAIKMANNSAWTAVVSHRSGETEDTTIADLAVAMNAGQIKTGAPCRAERTAKYNRLLRIEEELGGKAKYPGKEAFFNLK</sequence>
<accession>Q3Z8W4</accession>
<name>ENO_DEHM1</name>
<reference key="1">
    <citation type="journal article" date="2005" name="Science">
        <title>Genome sequence of the PCE-dechlorinating bacterium Dehalococcoides ethenogenes.</title>
        <authorList>
            <person name="Seshadri R."/>
            <person name="Adrian L."/>
            <person name="Fouts D.E."/>
            <person name="Eisen J.A."/>
            <person name="Phillippy A.M."/>
            <person name="Methe B.A."/>
            <person name="Ward N.L."/>
            <person name="Nelson W.C."/>
            <person name="DeBoy R.T."/>
            <person name="Khouri H.M."/>
            <person name="Kolonay J.F."/>
            <person name="Dodson R.J."/>
            <person name="Daugherty S.C."/>
            <person name="Brinkac L.M."/>
            <person name="Sullivan S.A."/>
            <person name="Madupu R."/>
            <person name="Nelson K.E."/>
            <person name="Kang K.H."/>
            <person name="Impraim M."/>
            <person name="Tran K."/>
            <person name="Robinson J.M."/>
            <person name="Forberger H.A."/>
            <person name="Fraser C.M."/>
            <person name="Zinder S.H."/>
            <person name="Heidelberg J.F."/>
        </authorList>
    </citation>
    <scope>NUCLEOTIDE SEQUENCE [LARGE SCALE GENOMIC DNA]</scope>
    <source>
        <strain>ATCC BAA-2266 / KCTC 15142 / 195</strain>
    </source>
</reference>
<gene>
    <name evidence="1" type="primary">eno</name>
    <name type="ordered locus">DET0593</name>
</gene>
<organism>
    <name type="scientific">Dehalococcoides mccartyi (strain ATCC BAA-2266 / KCTC 15142 / 195)</name>
    <name type="common">Dehalococcoides ethenogenes (strain 195)</name>
    <dbReference type="NCBI Taxonomy" id="243164"/>
    <lineage>
        <taxon>Bacteria</taxon>
        <taxon>Bacillati</taxon>
        <taxon>Chloroflexota</taxon>
        <taxon>Dehalococcoidia</taxon>
        <taxon>Dehalococcoidales</taxon>
        <taxon>Dehalococcoidaceae</taxon>
        <taxon>Dehalococcoides</taxon>
    </lineage>
</organism>
<keyword id="KW-0963">Cytoplasm</keyword>
<keyword id="KW-0324">Glycolysis</keyword>
<keyword id="KW-0456">Lyase</keyword>
<keyword id="KW-0460">Magnesium</keyword>
<keyword id="KW-0479">Metal-binding</keyword>
<keyword id="KW-0964">Secreted</keyword>
<dbReference type="EC" id="4.2.1.11" evidence="1"/>
<dbReference type="EMBL" id="CP000027">
    <property type="protein sequence ID" value="AAW40114.1"/>
    <property type="molecule type" value="Genomic_DNA"/>
</dbReference>
<dbReference type="RefSeq" id="WP_010936368.1">
    <property type="nucleotide sequence ID" value="NC_002936.3"/>
</dbReference>
<dbReference type="SMR" id="Q3Z8W4"/>
<dbReference type="FunCoup" id="Q3Z8W4">
    <property type="interactions" value="252"/>
</dbReference>
<dbReference type="STRING" id="243164.DET0593"/>
<dbReference type="GeneID" id="3230077"/>
<dbReference type="KEGG" id="det:DET0593"/>
<dbReference type="PATRIC" id="fig|243164.10.peg.571"/>
<dbReference type="eggNOG" id="COG0148">
    <property type="taxonomic scope" value="Bacteria"/>
</dbReference>
<dbReference type="HOGENOM" id="CLU_031223_2_1_0"/>
<dbReference type="InParanoid" id="Q3Z8W4"/>
<dbReference type="UniPathway" id="UPA00109">
    <property type="reaction ID" value="UER00187"/>
</dbReference>
<dbReference type="Proteomes" id="UP000008289">
    <property type="component" value="Chromosome"/>
</dbReference>
<dbReference type="GO" id="GO:0009986">
    <property type="term" value="C:cell surface"/>
    <property type="evidence" value="ECO:0007669"/>
    <property type="project" value="UniProtKB-SubCell"/>
</dbReference>
<dbReference type="GO" id="GO:0005576">
    <property type="term" value="C:extracellular region"/>
    <property type="evidence" value="ECO:0007669"/>
    <property type="project" value="UniProtKB-SubCell"/>
</dbReference>
<dbReference type="GO" id="GO:0000015">
    <property type="term" value="C:phosphopyruvate hydratase complex"/>
    <property type="evidence" value="ECO:0007669"/>
    <property type="project" value="InterPro"/>
</dbReference>
<dbReference type="GO" id="GO:0000287">
    <property type="term" value="F:magnesium ion binding"/>
    <property type="evidence" value="ECO:0007669"/>
    <property type="project" value="UniProtKB-UniRule"/>
</dbReference>
<dbReference type="GO" id="GO:0004634">
    <property type="term" value="F:phosphopyruvate hydratase activity"/>
    <property type="evidence" value="ECO:0007669"/>
    <property type="project" value="UniProtKB-UniRule"/>
</dbReference>
<dbReference type="GO" id="GO:0006096">
    <property type="term" value="P:glycolytic process"/>
    <property type="evidence" value="ECO:0007669"/>
    <property type="project" value="UniProtKB-UniRule"/>
</dbReference>
<dbReference type="CDD" id="cd03313">
    <property type="entry name" value="enolase"/>
    <property type="match status" value="1"/>
</dbReference>
<dbReference type="FunFam" id="3.20.20.120:FF:000001">
    <property type="entry name" value="Enolase"/>
    <property type="match status" value="1"/>
</dbReference>
<dbReference type="FunFam" id="3.30.390.10:FF:000001">
    <property type="entry name" value="Enolase"/>
    <property type="match status" value="1"/>
</dbReference>
<dbReference type="Gene3D" id="3.20.20.120">
    <property type="entry name" value="Enolase-like C-terminal domain"/>
    <property type="match status" value="1"/>
</dbReference>
<dbReference type="Gene3D" id="3.30.390.10">
    <property type="entry name" value="Enolase-like, N-terminal domain"/>
    <property type="match status" value="1"/>
</dbReference>
<dbReference type="HAMAP" id="MF_00318">
    <property type="entry name" value="Enolase"/>
    <property type="match status" value="1"/>
</dbReference>
<dbReference type="InterPro" id="IPR000941">
    <property type="entry name" value="Enolase"/>
</dbReference>
<dbReference type="InterPro" id="IPR036849">
    <property type="entry name" value="Enolase-like_C_sf"/>
</dbReference>
<dbReference type="InterPro" id="IPR029017">
    <property type="entry name" value="Enolase-like_N"/>
</dbReference>
<dbReference type="InterPro" id="IPR020810">
    <property type="entry name" value="Enolase_C"/>
</dbReference>
<dbReference type="InterPro" id="IPR020809">
    <property type="entry name" value="Enolase_CS"/>
</dbReference>
<dbReference type="InterPro" id="IPR020811">
    <property type="entry name" value="Enolase_N"/>
</dbReference>
<dbReference type="NCBIfam" id="TIGR01060">
    <property type="entry name" value="eno"/>
    <property type="match status" value="1"/>
</dbReference>
<dbReference type="PANTHER" id="PTHR11902">
    <property type="entry name" value="ENOLASE"/>
    <property type="match status" value="1"/>
</dbReference>
<dbReference type="PANTHER" id="PTHR11902:SF1">
    <property type="entry name" value="ENOLASE"/>
    <property type="match status" value="1"/>
</dbReference>
<dbReference type="Pfam" id="PF00113">
    <property type="entry name" value="Enolase_C"/>
    <property type="match status" value="1"/>
</dbReference>
<dbReference type="Pfam" id="PF03952">
    <property type="entry name" value="Enolase_N"/>
    <property type="match status" value="1"/>
</dbReference>
<dbReference type="PIRSF" id="PIRSF001400">
    <property type="entry name" value="Enolase"/>
    <property type="match status" value="1"/>
</dbReference>
<dbReference type="PRINTS" id="PR00148">
    <property type="entry name" value="ENOLASE"/>
</dbReference>
<dbReference type="SFLD" id="SFLDS00001">
    <property type="entry name" value="Enolase"/>
    <property type="match status" value="1"/>
</dbReference>
<dbReference type="SFLD" id="SFLDF00002">
    <property type="entry name" value="enolase"/>
    <property type="match status" value="1"/>
</dbReference>
<dbReference type="SMART" id="SM01192">
    <property type="entry name" value="Enolase_C"/>
    <property type="match status" value="1"/>
</dbReference>
<dbReference type="SMART" id="SM01193">
    <property type="entry name" value="Enolase_N"/>
    <property type="match status" value="1"/>
</dbReference>
<dbReference type="SUPFAM" id="SSF51604">
    <property type="entry name" value="Enolase C-terminal domain-like"/>
    <property type="match status" value="1"/>
</dbReference>
<dbReference type="SUPFAM" id="SSF54826">
    <property type="entry name" value="Enolase N-terminal domain-like"/>
    <property type="match status" value="1"/>
</dbReference>
<dbReference type="PROSITE" id="PS00164">
    <property type="entry name" value="ENOLASE"/>
    <property type="match status" value="1"/>
</dbReference>
<feature type="chain" id="PRO_0000267025" description="Enolase">
    <location>
        <begin position="1"/>
        <end position="428"/>
    </location>
</feature>
<feature type="active site" description="Proton donor" evidence="1">
    <location>
        <position position="206"/>
    </location>
</feature>
<feature type="active site" description="Proton acceptor" evidence="1">
    <location>
        <position position="338"/>
    </location>
</feature>
<feature type="binding site" evidence="1">
    <location>
        <position position="164"/>
    </location>
    <ligand>
        <name>(2R)-2-phosphoglycerate</name>
        <dbReference type="ChEBI" id="CHEBI:58289"/>
    </ligand>
</feature>
<feature type="binding site" evidence="1">
    <location>
        <position position="243"/>
    </location>
    <ligand>
        <name>Mg(2+)</name>
        <dbReference type="ChEBI" id="CHEBI:18420"/>
    </ligand>
</feature>
<feature type="binding site" evidence="1">
    <location>
        <position position="286"/>
    </location>
    <ligand>
        <name>Mg(2+)</name>
        <dbReference type="ChEBI" id="CHEBI:18420"/>
    </ligand>
</feature>
<feature type="binding site" evidence="1">
    <location>
        <position position="313"/>
    </location>
    <ligand>
        <name>Mg(2+)</name>
        <dbReference type="ChEBI" id="CHEBI:18420"/>
    </ligand>
</feature>
<feature type="binding site" evidence="1">
    <location>
        <position position="338"/>
    </location>
    <ligand>
        <name>(2R)-2-phosphoglycerate</name>
        <dbReference type="ChEBI" id="CHEBI:58289"/>
    </ligand>
</feature>
<feature type="binding site" evidence="1">
    <location>
        <position position="367"/>
    </location>
    <ligand>
        <name>(2R)-2-phosphoglycerate</name>
        <dbReference type="ChEBI" id="CHEBI:58289"/>
    </ligand>
</feature>
<feature type="binding site" evidence="1">
    <location>
        <position position="368"/>
    </location>
    <ligand>
        <name>(2R)-2-phosphoglycerate</name>
        <dbReference type="ChEBI" id="CHEBI:58289"/>
    </ligand>
</feature>
<feature type="binding site" evidence="1">
    <location>
        <position position="389"/>
    </location>
    <ligand>
        <name>(2R)-2-phosphoglycerate</name>
        <dbReference type="ChEBI" id="CHEBI:58289"/>
    </ligand>
</feature>
<evidence type="ECO:0000255" key="1">
    <source>
        <dbReference type="HAMAP-Rule" id="MF_00318"/>
    </source>
</evidence>
<protein>
    <recommendedName>
        <fullName evidence="1">Enolase</fullName>
        <ecNumber evidence="1">4.2.1.11</ecNumber>
    </recommendedName>
    <alternativeName>
        <fullName evidence="1">2-phospho-D-glycerate hydro-lyase</fullName>
    </alternativeName>
    <alternativeName>
        <fullName evidence="1">2-phosphoglycerate dehydratase</fullName>
    </alternativeName>
</protein>
<comment type="function">
    <text evidence="1">Catalyzes the reversible conversion of 2-phosphoglycerate (2-PG) into phosphoenolpyruvate (PEP). It is essential for the degradation of carbohydrates via glycolysis.</text>
</comment>
<comment type="catalytic activity">
    <reaction evidence="1">
        <text>(2R)-2-phosphoglycerate = phosphoenolpyruvate + H2O</text>
        <dbReference type="Rhea" id="RHEA:10164"/>
        <dbReference type="ChEBI" id="CHEBI:15377"/>
        <dbReference type="ChEBI" id="CHEBI:58289"/>
        <dbReference type="ChEBI" id="CHEBI:58702"/>
        <dbReference type="EC" id="4.2.1.11"/>
    </reaction>
</comment>
<comment type="cofactor">
    <cofactor evidence="1">
        <name>Mg(2+)</name>
        <dbReference type="ChEBI" id="CHEBI:18420"/>
    </cofactor>
    <text evidence="1">Binds a second Mg(2+) ion via substrate during catalysis.</text>
</comment>
<comment type="pathway">
    <text evidence="1">Carbohydrate degradation; glycolysis; pyruvate from D-glyceraldehyde 3-phosphate: step 4/5.</text>
</comment>
<comment type="subcellular location">
    <subcellularLocation>
        <location evidence="1">Cytoplasm</location>
    </subcellularLocation>
    <subcellularLocation>
        <location evidence="1">Secreted</location>
    </subcellularLocation>
    <subcellularLocation>
        <location evidence="1">Cell surface</location>
    </subcellularLocation>
    <text evidence="1">Fractions of enolase are present in both the cytoplasm and on the cell surface.</text>
</comment>
<comment type="similarity">
    <text evidence="1">Belongs to the enolase family.</text>
</comment>
<proteinExistence type="inferred from homology"/>